<name>GUN12_ORYSJ</name>
<accession>Q7XUK4</accession>
<accession>Q0JC19</accession>
<dbReference type="EC" id="3.2.1.4"/>
<dbReference type="EMBL" id="AL606627">
    <property type="protein sequence ID" value="CAD41250.2"/>
    <property type="molecule type" value="Genomic_DNA"/>
</dbReference>
<dbReference type="EMBL" id="AP008210">
    <property type="protein sequence ID" value="BAF15118.2"/>
    <property type="status" value="ALT_SEQ"/>
    <property type="molecule type" value="Genomic_DNA"/>
</dbReference>
<dbReference type="EMBL" id="AP014960">
    <property type="protein sequence ID" value="BAS89897.1"/>
    <property type="molecule type" value="Genomic_DNA"/>
</dbReference>
<dbReference type="EMBL" id="AK243593">
    <property type="status" value="NOT_ANNOTATED_CDS"/>
    <property type="molecule type" value="mRNA"/>
</dbReference>
<dbReference type="RefSeq" id="XP_015636553.1">
    <property type="nucleotide sequence ID" value="XM_015781067.1"/>
</dbReference>
<dbReference type="SMR" id="Q7XUK4"/>
<dbReference type="FunCoup" id="Q7XUK4">
    <property type="interactions" value="139"/>
</dbReference>
<dbReference type="STRING" id="39947.Q7XUK4"/>
<dbReference type="CAZy" id="GH9">
    <property type="family name" value="Glycoside Hydrolase Family 9"/>
</dbReference>
<dbReference type="GlyCosmos" id="Q7XUK4">
    <property type="glycosylation" value="6 sites, No reported glycans"/>
</dbReference>
<dbReference type="PaxDb" id="39947-Q7XUK4"/>
<dbReference type="EnsemblPlants" id="Os04t0497200-01">
    <property type="protein sequence ID" value="Os04t0497200-01"/>
    <property type="gene ID" value="Os04g0497200"/>
</dbReference>
<dbReference type="Gramene" id="Os04t0497200-01">
    <property type="protein sequence ID" value="Os04t0497200-01"/>
    <property type="gene ID" value="Os04g0497200"/>
</dbReference>
<dbReference type="KEGG" id="dosa:Os04g0497200"/>
<dbReference type="eggNOG" id="ENOG502QSIM">
    <property type="taxonomic scope" value="Eukaryota"/>
</dbReference>
<dbReference type="HOGENOM" id="CLU_008926_1_3_1"/>
<dbReference type="InParanoid" id="Q7XUK4"/>
<dbReference type="OMA" id="MCSYLHQ"/>
<dbReference type="OrthoDB" id="10257085at2759"/>
<dbReference type="PlantReactome" id="R-OSA-9030654">
    <property type="pathway name" value="Primary root development"/>
</dbReference>
<dbReference type="Proteomes" id="UP000000763">
    <property type="component" value="Chromosome 4"/>
</dbReference>
<dbReference type="Proteomes" id="UP000059680">
    <property type="component" value="Chromosome 4"/>
</dbReference>
<dbReference type="ExpressionAtlas" id="Q7XUK4">
    <property type="expression patterns" value="baseline and differential"/>
</dbReference>
<dbReference type="GO" id="GO:0016020">
    <property type="term" value="C:membrane"/>
    <property type="evidence" value="ECO:0007669"/>
    <property type="project" value="UniProtKB-SubCell"/>
</dbReference>
<dbReference type="GO" id="GO:0008810">
    <property type="term" value="F:cellulase activity"/>
    <property type="evidence" value="ECO:0007669"/>
    <property type="project" value="UniProtKB-EC"/>
</dbReference>
<dbReference type="GO" id="GO:0071555">
    <property type="term" value="P:cell wall organization"/>
    <property type="evidence" value="ECO:0007669"/>
    <property type="project" value="UniProtKB-KW"/>
</dbReference>
<dbReference type="GO" id="GO:0030245">
    <property type="term" value="P:cellulose catabolic process"/>
    <property type="evidence" value="ECO:0007669"/>
    <property type="project" value="UniProtKB-KW"/>
</dbReference>
<dbReference type="FunFam" id="1.50.10.10:FF:000020">
    <property type="entry name" value="Endoglucanase"/>
    <property type="match status" value="1"/>
</dbReference>
<dbReference type="Gene3D" id="1.50.10.10">
    <property type="match status" value="1"/>
</dbReference>
<dbReference type="InterPro" id="IPR008928">
    <property type="entry name" value="6-hairpin_glycosidase_sf"/>
</dbReference>
<dbReference type="InterPro" id="IPR012341">
    <property type="entry name" value="6hp_glycosidase-like_sf"/>
</dbReference>
<dbReference type="InterPro" id="IPR001701">
    <property type="entry name" value="Glyco_hydro_9"/>
</dbReference>
<dbReference type="InterPro" id="IPR033126">
    <property type="entry name" value="Glyco_hydro_9_Asp/Glu_AS"/>
</dbReference>
<dbReference type="InterPro" id="IPR018221">
    <property type="entry name" value="Glyco_hydro_9_His_AS"/>
</dbReference>
<dbReference type="PANTHER" id="PTHR22298">
    <property type="entry name" value="ENDO-1,4-BETA-GLUCANASE"/>
    <property type="match status" value="1"/>
</dbReference>
<dbReference type="Pfam" id="PF00759">
    <property type="entry name" value="Glyco_hydro_9"/>
    <property type="match status" value="1"/>
</dbReference>
<dbReference type="SUPFAM" id="SSF48208">
    <property type="entry name" value="Six-hairpin glycosidases"/>
    <property type="match status" value="1"/>
</dbReference>
<dbReference type="PROSITE" id="PS60032">
    <property type="entry name" value="GH9_1"/>
    <property type="match status" value="1"/>
</dbReference>
<dbReference type="PROSITE" id="PS00592">
    <property type="entry name" value="GH9_2"/>
    <property type="match status" value="1"/>
</dbReference>
<dbReference type="PROSITE" id="PS00698">
    <property type="entry name" value="GH9_3"/>
    <property type="match status" value="1"/>
</dbReference>
<sequence>MYSANHWGGSFEIAADGAAEDDHSRNMDLDRGALSARQHQLDETQQSWLLGPPEAKKKDKYVDLGCVVVKRKLLWWVLWTLLAAFILIGLPVIIAKSIPKKKPHAPPPDQYTDALHKALLFFNAQKSGRLPKNNGIKWRGNSGLSDGSDLTDVKGGLVGGYYDAGDNIKFHFPLAFSMTMLSWSVIEYSAKYKAVGEYDHVRELIKWGTDYLLLTFNSSASTIDKVYSQVGIAKINGTQPDDHYCWNRPEDMAYPRPVQTAGSAPDLGGEMAAALAAASIVFRDNAAYSKKLVNGAAAVYKFARSSGRRTPYSRGNQYIEYYYNSTSYWDEYMWSAAWMYYATGNNTYITFATDPRLPKNAKAFYSILDFSVFSWDNKLPGAELLLSRLRMFLNPGYPYEESLIGYHNTTSMNMCTYFPRFGAFNFTKGGLAQFNHGKGQPLQYTVANSFLAALYADYMESVNVPGWYCGPYFMTVDDLRSFARSQVNYILGDNPKKMSYVVGYGKKYPRRLHHRGASTPHNGIKYSCTGGYKWRDTKGADPNVLVGAMVGGPDKNDQFKDARLTYAQNEPTLVGNAGLVAALVALTNSGRGAGVTAVDKNTMFSAVPPMFPATPPPPSKWKP</sequence>
<protein>
    <recommendedName>
        <fullName>Endoglucanase 12</fullName>
        <ecNumber>3.2.1.4</ecNumber>
    </recommendedName>
    <alternativeName>
        <fullName>Endo-1,4-beta glucanase 12</fullName>
    </alternativeName>
    <alternativeName>
        <fullName>OsGLU3</fullName>
    </alternativeName>
</protein>
<evidence type="ECO:0000255" key="1"/>
<evidence type="ECO:0000255" key="2">
    <source>
        <dbReference type="PROSITE-ProRule" id="PRU10059"/>
    </source>
</evidence>
<evidence type="ECO:0000255" key="3">
    <source>
        <dbReference type="PROSITE-ProRule" id="PRU10060"/>
    </source>
</evidence>
<evidence type="ECO:0000255" key="4">
    <source>
        <dbReference type="PROSITE-ProRule" id="PRU10140"/>
    </source>
</evidence>
<evidence type="ECO:0000269" key="5">
    <source>
    </source>
</evidence>
<evidence type="ECO:0000305" key="6"/>
<comment type="catalytic activity">
    <reaction>
        <text>Endohydrolysis of (1-&gt;4)-beta-D-glucosidic linkages in cellulose, lichenin and cereal beta-D-glucans.</text>
        <dbReference type="EC" id="3.2.1.4"/>
    </reaction>
</comment>
<comment type="subcellular location">
    <subcellularLocation>
        <location evidence="6">Membrane</location>
        <topology evidence="6">Single-pass type II membrane protein</topology>
    </subcellularLocation>
</comment>
<comment type="tissue specificity">
    <text evidence="5">Ubiquitous.</text>
</comment>
<comment type="similarity">
    <text evidence="4 6">Belongs to the glycosyl hydrolase 9 (cellulase E) family.</text>
</comment>
<comment type="sequence caution" evidence="6">
    <conflict type="erroneous gene model prediction">
        <sequence resource="EMBL-CDS" id="BAF15118"/>
    </conflict>
</comment>
<feature type="chain" id="PRO_0000249289" description="Endoglucanase 12">
    <location>
        <begin position="1"/>
        <end position="623"/>
    </location>
</feature>
<feature type="topological domain" description="Cytoplasmic" evidence="1">
    <location>
        <begin position="1"/>
        <end position="73"/>
    </location>
</feature>
<feature type="transmembrane region" description="Helical; Signal-anchor for type II membrane protein" evidence="1">
    <location>
        <begin position="74"/>
        <end position="94"/>
    </location>
</feature>
<feature type="topological domain" description="Extracellular" evidence="1">
    <location>
        <begin position="95"/>
        <end position="623"/>
    </location>
</feature>
<feature type="active site" description="Nucleophile" evidence="4">
    <location>
        <position position="166"/>
    </location>
</feature>
<feature type="active site" evidence="2">
    <location>
        <position position="513"/>
    </location>
</feature>
<feature type="active site" evidence="3">
    <location>
        <position position="561"/>
    </location>
</feature>
<feature type="active site" evidence="3">
    <location>
        <position position="570"/>
    </location>
</feature>
<feature type="glycosylation site" description="N-linked (GlcNAc...) asparagine" evidence="1">
    <location>
        <position position="217"/>
    </location>
</feature>
<feature type="glycosylation site" description="N-linked (GlcNAc...) asparagine" evidence="1">
    <location>
        <position position="236"/>
    </location>
</feature>
<feature type="glycosylation site" description="N-linked (GlcNAc...) asparagine" evidence="1">
    <location>
        <position position="324"/>
    </location>
</feature>
<feature type="glycosylation site" description="N-linked (GlcNAc...) asparagine" evidence="1">
    <location>
        <position position="345"/>
    </location>
</feature>
<feature type="glycosylation site" description="N-linked (GlcNAc...) asparagine" evidence="1">
    <location>
        <position position="408"/>
    </location>
</feature>
<feature type="glycosylation site" description="N-linked (GlcNAc...) asparagine" evidence="1">
    <location>
        <position position="425"/>
    </location>
</feature>
<keyword id="KW-0119">Carbohydrate metabolism</keyword>
<keyword id="KW-0961">Cell wall biogenesis/degradation</keyword>
<keyword id="KW-0136">Cellulose degradation</keyword>
<keyword id="KW-0325">Glycoprotein</keyword>
<keyword id="KW-0326">Glycosidase</keyword>
<keyword id="KW-0378">Hydrolase</keyword>
<keyword id="KW-0472">Membrane</keyword>
<keyword id="KW-0624">Polysaccharide degradation</keyword>
<keyword id="KW-1185">Reference proteome</keyword>
<keyword id="KW-0735">Signal-anchor</keyword>
<keyword id="KW-0812">Transmembrane</keyword>
<keyword id="KW-1133">Transmembrane helix</keyword>
<proteinExistence type="evidence at transcript level"/>
<organism>
    <name type="scientific">Oryza sativa subsp. japonica</name>
    <name type="common">Rice</name>
    <dbReference type="NCBI Taxonomy" id="39947"/>
    <lineage>
        <taxon>Eukaryota</taxon>
        <taxon>Viridiplantae</taxon>
        <taxon>Streptophyta</taxon>
        <taxon>Embryophyta</taxon>
        <taxon>Tracheophyta</taxon>
        <taxon>Spermatophyta</taxon>
        <taxon>Magnoliopsida</taxon>
        <taxon>Liliopsida</taxon>
        <taxon>Poales</taxon>
        <taxon>Poaceae</taxon>
        <taxon>BOP clade</taxon>
        <taxon>Oryzoideae</taxon>
        <taxon>Oryzeae</taxon>
        <taxon>Oryzinae</taxon>
        <taxon>Oryza</taxon>
        <taxon>Oryza sativa</taxon>
    </lineage>
</organism>
<reference key="1">
    <citation type="journal article" date="2002" name="Nature">
        <title>Sequence and analysis of rice chromosome 4.</title>
        <authorList>
            <person name="Feng Q."/>
            <person name="Zhang Y."/>
            <person name="Hao P."/>
            <person name="Wang S."/>
            <person name="Fu G."/>
            <person name="Huang Y."/>
            <person name="Li Y."/>
            <person name="Zhu J."/>
            <person name="Liu Y."/>
            <person name="Hu X."/>
            <person name="Jia P."/>
            <person name="Zhang Y."/>
            <person name="Zhao Q."/>
            <person name="Ying K."/>
            <person name="Yu S."/>
            <person name="Tang Y."/>
            <person name="Weng Q."/>
            <person name="Zhang L."/>
            <person name="Lu Y."/>
            <person name="Mu J."/>
            <person name="Lu Y."/>
            <person name="Zhang L.S."/>
            <person name="Yu Z."/>
            <person name="Fan D."/>
            <person name="Liu X."/>
            <person name="Lu T."/>
            <person name="Li C."/>
            <person name="Wu Y."/>
            <person name="Sun T."/>
            <person name="Lei H."/>
            <person name="Li T."/>
            <person name="Hu H."/>
            <person name="Guan J."/>
            <person name="Wu M."/>
            <person name="Zhang R."/>
            <person name="Zhou B."/>
            <person name="Chen Z."/>
            <person name="Chen L."/>
            <person name="Jin Z."/>
            <person name="Wang R."/>
            <person name="Yin H."/>
            <person name="Cai Z."/>
            <person name="Ren S."/>
            <person name="Lv G."/>
            <person name="Gu W."/>
            <person name="Zhu G."/>
            <person name="Tu Y."/>
            <person name="Jia J."/>
            <person name="Zhang Y."/>
            <person name="Chen J."/>
            <person name="Kang H."/>
            <person name="Chen X."/>
            <person name="Shao C."/>
            <person name="Sun Y."/>
            <person name="Hu Q."/>
            <person name="Zhang X."/>
            <person name="Zhang W."/>
            <person name="Wang L."/>
            <person name="Ding C."/>
            <person name="Sheng H."/>
            <person name="Gu J."/>
            <person name="Chen S."/>
            <person name="Ni L."/>
            <person name="Zhu F."/>
            <person name="Chen W."/>
            <person name="Lan L."/>
            <person name="Lai Y."/>
            <person name="Cheng Z."/>
            <person name="Gu M."/>
            <person name="Jiang J."/>
            <person name="Li J."/>
            <person name="Hong G."/>
            <person name="Xue Y."/>
            <person name="Han B."/>
        </authorList>
    </citation>
    <scope>NUCLEOTIDE SEQUENCE [LARGE SCALE GENOMIC DNA]</scope>
    <source>
        <strain>cv. Nipponbare</strain>
    </source>
</reference>
<reference key="2">
    <citation type="journal article" date="2005" name="Nature">
        <title>The map-based sequence of the rice genome.</title>
        <authorList>
            <consortium name="International rice genome sequencing project (IRGSP)"/>
        </authorList>
    </citation>
    <scope>NUCLEOTIDE SEQUENCE [LARGE SCALE GENOMIC DNA]</scope>
    <source>
        <strain>cv. Nipponbare</strain>
    </source>
</reference>
<reference key="3">
    <citation type="journal article" date="2008" name="Nucleic Acids Res.">
        <title>The rice annotation project database (RAP-DB): 2008 update.</title>
        <authorList>
            <consortium name="The rice annotation project (RAP)"/>
        </authorList>
    </citation>
    <scope>GENOME REANNOTATION</scope>
    <source>
        <strain>cv. Nipponbare</strain>
    </source>
</reference>
<reference key="4">
    <citation type="journal article" date="2013" name="Rice">
        <title>Improvement of the Oryza sativa Nipponbare reference genome using next generation sequence and optical map data.</title>
        <authorList>
            <person name="Kawahara Y."/>
            <person name="de la Bastide M."/>
            <person name="Hamilton J.P."/>
            <person name="Kanamori H."/>
            <person name="McCombie W.R."/>
            <person name="Ouyang S."/>
            <person name="Schwartz D.C."/>
            <person name="Tanaka T."/>
            <person name="Wu J."/>
            <person name="Zhou S."/>
            <person name="Childs K.L."/>
            <person name="Davidson R.M."/>
            <person name="Lin H."/>
            <person name="Quesada-Ocampo L."/>
            <person name="Vaillancourt B."/>
            <person name="Sakai H."/>
            <person name="Lee S.S."/>
            <person name="Kim J."/>
            <person name="Numa H."/>
            <person name="Itoh T."/>
            <person name="Buell C.R."/>
            <person name="Matsumoto T."/>
        </authorList>
    </citation>
    <scope>GENOME REANNOTATION</scope>
    <source>
        <strain>cv. Nipponbare</strain>
    </source>
</reference>
<reference key="5">
    <citation type="submission" date="2006-10" db="EMBL/GenBank/DDBJ databases">
        <title>Oryza sativa full length cDNA.</title>
        <authorList>
            <consortium name="The rice full-length cDNA consortium"/>
        </authorList>
    </citation>
    <scope>NUCLEOTIDE SEQUENCE [LARGE SCALE MRNA]</scope>
    <source>
        <strain>cv. Nipponbare</strain>
    </source>
</reference>
<reference key="6">
    <citation type="journal article" date="2006" name="Plant Mol. Biol.">
        <title>OsGLU1, a putative membrane-bound endo-1,4-beta-D-glucanase from rice, affects plant internode elongation.</title>
        <authorList>
            <person name="Zhou H.-L."/>
            <person name="He S.-J."/>
            <person name="Cao Y.-R."/>
            <person name="Chen T."/>
            <person name="Du B.-X."/>
            <person name="Chu C.-C."/>
            <person name="Zhang J.-S."/>
            <person name="Chen S.-Y."/>
        </authorList>
    </citation>
    <scope>TISSUE SPECIFICITY</scope>
</reference>
<gene>
    <name type="primary">GLU3</name>
    <name type="ordered locus">Os04g0497200</name>
    <name type="ordered locus">LOC_Os04g41970</name>
    <name type="ORF">OSJNBa0067K08.14</name>
</gene>